<comment type="function">
    <text evidence="2">Destroys radicals which are normally produced within the cells and which are toxic to biological systems.</text>
</comment>
<comment type="catalytic activity">
    <reaction evidence="2">
        <text>2 Fe(II)-[cytochrome c] + H2O2 + 2 H(+) = 2 Fe(III)-[cytochrome c] + 2 H2O</text>
        <dbReference type="Rhea" id="RHEA:16581"/>
        <dbReference type="Rhea" id="RHEA-COMP:10350"/>
        <dbReference type="Rhea" id="RHEA-COMP:14399"/>
        <dbReference type="ChEBI" id="CHEBI:15377"/>
        <dbReference type="ChEBI" id="CHEBI:15378"/>
        <dbReference type="ChEBI" id="CHEBI:16240"/>
        <dbReference type="ChEBI" id="CHEBI:29033"/>
        <dbReference type="ChEBI" id="CHEBI:29034"/>
        <dbReference type="EC" id="1.11.1.5"/>
    </reaction>
</comment>
<comment type="cofactor">
    <cofactor evidence="4">
        <name>heme b</name>
        <dbReference type="ChEBI" id="CHEBI:60344"/>
    </cofactor>
    <text evidence="4">Binds 1 heme b (iron(II)-protoporphyrin IX) group per subunit.</text>
</comment>
<comment type="subunit">
    <text evidence="2">Forms a one-to-one complex with cytochrome c.</text>
</comment>
<comment type="subcellular location">
    <subcellularLocation>
        <location evidence="2">Mitochondrion matrix</location>
    </subcellularLocation>
    <subcellularLocation>
        <location evidence="2">Mitochondrion intermembrane space</location>
    </subcellularLocation>
</comment>
<comment type="similarity">
    <text evidence="6">Belongs to the peroxidase family. Cytochrome c peroxidase subfamily.</text>
</comment>
<accession>Q6CAB5</accession>
<organism>
    <name type="scientific">Yarrowia lipolytica (strain CLIB 122 / E 150)</name>
    <name type="common">Yeast</name>
    <name type="synonym">Candida lipolytica</name>
    <dbReference type="NCBI Taxonomy" id="284591"/>
    <lineage>
        <taxon>Eukaryota</taxon>
        <taxon>Fungi</taxon>
        <taxon>Dikarya</taxon>
        <taxon>Ascomycota</taxon>
        <taxon>Saccharomycotina</taxon>
        <taxon>Dipodascomycetes</taxon>
        <taxon>Dipodascales</taxon>
        <taxon>Dipodascales incertae sedis</taxon>
        <taxon>Yarrowia</taxon>
    </lineage>
</organism>
<gene>
    <name type="ordered locus">YALI0D04268g</name>
</gene>
<feature type="transit peptide" description="Mitochondrion" evidence="3">
    <location>
        <begin position="1"/>
        <end status="unknown"/>
    </location>
</feature>
<feature type="chain" id="PRO_0000055590" description="Putative cytochrome c peroxidase, mitochondrial">
    <location>
        <begin status="unknown"/>
        <end position="285"/>
    </location>
</feature>
<feature type="active site" description="Proton acceptor" evidence="4 5">
    <location>
        <position position="37"/>
    </location>
</feature>
<feature type="active site" description="Tryptophan radical intermediate" evidence="1">
    <location>
        <position position="177"/>
    </location>
</feature>
<feature type="binding site" description="axial binding residue" evidence="4">
    <location>
        <position position="161"/>
    </location>
    <ligand>
        <name>heme b</name>
        <dbReference type="ChEBI" id="CHEBI:60344"/>
    </ligand>
    <ligandPart>
        <name>Fe</name>
        <dbReference type="ChEBI" id="CHEBI:18248"/>
    </ligandPart>
</feature>
<feature type="site" description="Transition state stabilizer" evidence="4">
    <location>
        <position position="33"/>
    </location>
</feature>
<dbReference type="EC" id="1.11.1.5" evidence="2"/>
<dbReference type="EMBL" id="CR382130">
    <property type="protein sequence ID" value="CAG80585.1"/>
    <property type="molecule type" value="Genomic_DNA"/>
</dbReference>
<dbReference type="RefSeq" id="XP_502397.1">
    <property type="nucleotide sequence ID" value="XM_502397.1"/>
</dbReference>
<dbReference type="SMR" id="Q6CAB5"/>
<dbReference type="STRING" id="284591.Q6CAB5"/>
<dbReference type="PeroxiBase" id="2542">
    <property type="entry name" value="YlCcP01"/>
</dbReference>
<dbReference type="EnsemblFungi" id="CAG80585">
    <property type="protein sequence ID" value="CAG80585"/>
    <property type="gene ID" value="YALI0_D04268g"/>
</dbReference>
<dbReference type="KEGG" id="yli:2910632"/>
<dbReference type="VEuPathDB" id="FungiDB:YALI0_D04268g"/>
<dbReference type="HOGENOM" id="CLU_036959_0_1_1"/>
<dbReference type="InParanoid" id="Q6CAB5"/>
<dbReference type="OMA" id="GAWVNNP"/>
<dbReference type="OrthoDB" id="103212at4891"/>
<dbReference type="Proteomes" id="UP000001300">
    <property type="component" value="Chromosome D"/>
</dbReference>
<dbReference type="GO" id="GO:0005758">
    <property type="term" value="C:mitochondrial intermembrane space"/>
    <property type="evidence" value="ECO:0007669"/>
    <property type="project" value="UniProtKB-SubCell"/>
</dbReference>
<dbReference type="GO" id="GO:0005759">
    <property type="term" value="C:mitochondrial matrix"/>
    <property type="evidence" value="ECO:0007669"/>
    <property type="project" value="UniProtKB-SubCell"/>
</dbReference>
<dbReference type="GO" id="GO:0004130">
    <property type="term" value="F:cytochrome-c peroxidase activity"/>
    <property type="evidence" value="ECO:0007669"/>
    <property type="project" value="UniProtKB-EC"/>
</dbReference>
<dbReference type="GO" id="GO:0020037">
    <property type="term" value="F:heme binding"/>
    <property type="evidence" value="ECO:0007669"/>
    <property type="project" value="InterPro"/>
</dbReference>
<dbReference type="GO" id="GO:0046872">
    <property type="term" value="F:metal ion binding"/>
    <property type="evidence" value="ECO:0007669"/>
    <property type="project" value="UniProtKB-KW"/>
</dbReference>
<dbReference type="GO" id="GO:0004601">
    <property type="term" value="F:peroxidase activity"/>
    <property type="evidence" value="ECO:0000318"/>
    <property type="project" value="GO_Central"/>
</dbReference>
<dbReference type="GO" id="GO:0034599">
    <property type="term" value="P:cellular response to oxidative stress"/>
    <property type="evidence" value="ECO:0000318"/>
    <property type="project" value="GO_Central"/>
</dbReference>
<dbReference type="GO" id="GO:0042744">
    <property type="term" value="P:hydrogen peroxide catabolic process"/>
    <property type="evidence" value="ECO:0000318"/>
    <property type="project" value="GO_Central"/>
</dbReference>
<dbReference type="GO" id="GO:0000302">
    <property type="term" value="P:response to reactive oxygen species"/>
    <property type="evidence" value="ECO:0000318"/>
    <property type="project" value="GO_Central"/>
</dbReference>
<dbReference type="CDD" id="cd00691">
    <property type="entry name" value="ascorbate_peroxidase"/>
    <property type="match status" value="1"/>
</dbReference>
<dbReference type="FunFam" id="1.10.420.10:FF:000009">
    <property type="entry name" value="Ascorbate peroxidase"/>
    <property type="match status" value="1"/>
</dbReference>
<dbReference type="FunFam" id="1.10.520.10:FF:000005">
    <property type="entry name" value="Cytochrome c peroxidase"/>
    <property type="match status" value="1"/>
</dbReference>
<dbReference type="Gene3D" id="1.10.520.10">
    <property type="match status" value="1"/>
</dbReference>
<dbReference type="Gene3D" id="1.10.420.10">
    <property type="entry name" value="Peroxidase, domain 2"/>
    <property type="match status" value="1"/>
</dbReference>
<dbReference type="InterPro" id="IPR044831">
    <property type="entry name" value="Ccp1-like"/>
</dbReference>
<dbReference type="InterPro" id="IPR002016">
    <property type="entry name" value="Haem_peroxidase"/>
</dbReference>
<dbReference type="InterPro" id="IPR010255">
    <property type="entry name" value="Haem_peroxidase_sf"/>
</dbReference>
<dbReference type="InterPro" id="IPR002207">
    <property type="entry name" value="Peroxidase_I"/>
</dbReference>
<dbReference type="InterPro" id="IPR019794">
    <property type="entry name" value="Peroxidases_AS"/>
</dbReference>
<dbReference type="PANTHER" id="PTHR31356:SF36">
    <property type="entry name" value="L-ASCORBATE PEROXIDASE 3"/>
    <property type="match status" value="1"/>
</dbReference>
<dbReference type="PANTHER" id="PTHR31356">
    <property type="entry name" value="THYLAKOID LUMENAL 29 KDA PROTEIN, CHLOROPLASTIC-RELATED"/>
    <property type="match status" value="1"/>
</dbReference>
<dbReference type="Pfam" id="PF00141">
    <property type="entry name" value="peroxidase"/>
    <property type="match status" value="1"/>
</dbReference>
<dbReference type="PRINTS" id="PR00459">
    <property type="entry name" value="ASPEROXIDASE"/>
</dbReference>
<dbReference type="PRINTS" id="PR00458">
    <property type="entry name" value="PEROXIDASE"/>
</dbReference>
<dbReference type="SUPFAM" id="SSF48113">
    <property type="entry name" value="Heme-dependent peroxidases"/>
    <property type="match status" value="1"/>
</dbReference>
<dbReference type="PROSITE" id="PS00436">
    <property type="entry name" value="PEROXIDASE_2"/>
    <property type="match status" value="1"/>
</dbReference>
<dbReference type="PROSITE" id="PS50873">
    <property type="entry name" value="PEROXIDASE_4"/>
    <property type="match status" value="1"/>
</dbReference>
<reference key="1">
    <citation type="journal article" date="2004" name="Nature">
        <title>Genome evolution in yeasts.</title>
        <authorList>
            <person name="Dujon B."/>
            <person name="Sherman D."/>
            <person name="Fischer G."/>
            <person name="Durrens P."/>
            <person name="Casaregola S."/>
            <person name="Lafontaine I."/>
            <person name="de Montigny J."/>
            <person name="Marck C."/>
            <person name="Neuveglise C."/>
            <person name="Talla E."/>
            <person name="Goffard N."/>
            <person name="Frangeul L."/>
            <person name="Aigle M."/>
            <person name="Anthouard V."/>
            <person name="Babour A."/>
            <person name="Barbe V."/>
            <person name="Barnay S."/>
            <person name="Blanchin S."/>
            <person name="Beckerich J.-M."/>
            <person name="Beyne E."/>
            <person name="Bleykasten C."/>
            <person name="Boisrame A."/>
            <person name="Boyer J."/>
            <person name="Cattolico L."/>
            <person name="Confanioleri F."/>
            <person name="de Daruvar A."/>
            <person name="Despons L."/>
            <person name="Fabre E."/>
            <person name="Fairhead C."/>
            <person name="Ferry-Dumazet H."/>
            <person name="Groppi A."/>
            <person name="Hantraye F."/>
            <person name="Hennequin C."/>
            <person name="Jauniaux N."/>
            <person name="Joyet P."/>
            <person name="Kachouri R."/>
            <person name="Kerrest A."/>
            <person name="Koszul R."/>
            <person name="Lemaire M."/>
            <person name="Lesur I."/>
            <person name="Ma L."/>
            <person name="Muller H."/>
            <person name="Nicaud J.-M."/>
            <person name="Nikolski M."/>
            <person name="Oztas S."/>
            <person name="Ozier-Kalogeropoulos O."/>
            <person name="Pellenz S."/>
            <person name="Potier S."/>
            <person name="Richard G.-F."/>
            <person name="Straub M.-L."/>
            <person name="Suleau A."/>
            <person name="Swennen D."/>
            <person name="Tekaia F."/>
            <person name="Wesolowski-Louvel M."/>
            <person name="Westhof E."/>
            <person name="Wirth B."/>
            <person name="Zeniou-Meyer M."/>
            <person name="Zivanovic Y."/>
            <person name="Bolotin-Fukuhara M."/>
            <person name="Thierry A."/>
            <person name="Bouchier C."/>
            <person name="Caudron B."/>
            <person name="Scarpelli C."/>
            <person name="Gaillardin C."/>
            <person name="Weissenbach J."/>
            <person name="Wincker P."/>
            <person name="Souciet J.-L."/>
        </authorList>
    </citation>
    <scope>NUCLEOTIDE SEQUENCE [LARGE SCALE GENOMIC DNA]</scope>
    <source>
        <strain>CLIB 122 / E 150</strain>
    </source>
</reference>
<proteinExistence type="inferred from homology"/>
<protein>
    <recommendedName>
        <fullName>Putative cytochrome c peroxidase, mitochondrial</fullName>
        <shortName>CCP</shortName>
        <ecNumber evidence="2">1.11.1.5</ecNumber>
    </recommendedName>
</protein>
<evidence type="ECO:0000250" key="1"/>
<evidence type="ECO:0000250" key="2">
    <source>
        <dbReference type="UniProtKB" id="P00431"/>
    </source>
</evidence>
<evidence type="ECO:0000255" key="3"/>
<evidence type="ECO:0000255" key="4">
    <source>
        <dbReference type="PROSITE-ProRule" id="PRU00297"/>
    </source>
</evidence>
<evidence type="ECO:0000255" key="5">
    <source>
        <dbReference type="PROSITE-ProRule" id="PRU10012"/>
    </source>
</evidence>
<evidence type="ECO:0000305" key="6"/>
<sequence>MAEGDYNAVREAIADILDNDDYDDGSIGPVLVRLAWHASGTYDKATGTGGSNGATMRYMKEAKDEANNGLENARQFLEPIKAKFPWITYADLWTLAGVVAIEEMDGPKVPWKPGRQDYVDETNVPPNGRLPDGAQGQDHLRDIFYRMGFNDQEIVALCGAHNMGRCHMDRSGFEGAWVPNPIRFANTYFKLLMNEEWKLTTLKNGVKQYFNEDEELMMLPADYSLMQDPEFHKWVEIYAADKEKFFEDFSKVFAKLIELGVRRGPDGKAKTNFIDRNNNDPNPRL</sequence>
<name>CCPR2_YARLI</name>
<keyword id="KW-0349">Heme</keyword>
<keyword id="KW-0408">Iron</keyword>
<keyword id="KW-0479">Metal-binding</keyword>
<keyword id="KW-0496">Mitochondrion</keyword>
<keyword id="KW-0560">Oxidoreductase</keyword>
<keyword id="KW-0575">Peroxidase</keyword>
<keyword id="KW-1185">Reference proteome</keyword>
<keyword id="KW-0809">Transit peptide</keyword>